<dbReference type="EMBL" id="CP002685">
    <property type="protein sequence ID" value="AEC06688.1"/>
    <property type="molecule type" value="Genomic_DNA"/>
</dbReference>
<dbReference type="EMBL" id="BT008553">
    <property type="protein sequence ID" value="AAP40380.1"/>
    <property type="molecule type" value="mRNA"/>
</dbReference>
<dbReference type="EMBL" id="BT008664">
    <property type="protein sequence ID" value="AAP40476.1"/>
    <property type="molecule type" value="mRNA"/>
</dbReference>
<dbReference type="EMBL" id="AK229772">
    <property type="protein sequence ID" value="BAF01607.1"/>
    <property type="molecule type" value="mRNA"/>
</dbReference>
<dbReference type="RefSeq" id="NP_179370.2">
    <property type="nucleotide sequence ID" value="NM_127333.5"/>
</dbReference>
<dbReference type="SMR" id="Q7X659"/>
<dbReference type="BioGRID" id="1646">
    <property type="interactions" value="3"/>
</dbReference>
<dbReference type="FunCoup" id="Q7X659">
    <property type="interactions" value="5375"/>
</dbReference>
<dbReference type="IntAct" id="Q7X659">
    <property type="interactions" value="2"/>
</dbReference>
<dbReference type="STRING" id="3702.Q7X659"/>
<dbReference type="iPTMnet" id="Q7X659"/>
<dbReference type="PaxDb" id="3702-AT2G17790.1"/>
<dbReference type="ProteomicsDB" id="242749"/>
<dbReference type="EnsemblPlants" id="AT2G17790.1">
    <property type="protein sequence ID" value="AT2G17790.1"/>
    <property type="gene ID" value="AT2G17790"/>
</dbReference>
<dbReference type="GeneID" id="816289"/>
<dbReference type="Gramene" id="AT2G17790.1">
    <property type="protein sequence ID" value="AT2G17790.1"/>
    <property type="gene ID" value="AT2G17790"/>
</dbReference>
<dbReference type="KEGG" id="ath:AT2G17790"/>
<dbReference type="Araport" id="AT2G17790"/>
<dbReference type="TAIR" id="AT2G17790">
    <property type="gene designation" value="VPS35A"/>
</dbReference>
<dbReference type="eggNOG" id="KOG1107">
    <property type="taxonomic scope" value="Eukaryota"/>
</dbReference>
<dbReference type="HOGENOM" id="CLU_005836_1_0_1"/>
<dbReference type="InParanoid" id="Q7X659"/>
<dbReference type="OMA" id="YERVQFC"/>
<dbReference type="PhylomeDB" id="Q7X659"/>
<dbReference type="PRO" id="PR:Q7X659"/>
<dbReference type="Proteomes" id="UP000006548">
    <property type="component" value="Chromosome 2"/>
</dbReference>
<dbReference type="ExpressionAtlas" id="Q7X659">
    <property type="expression patterns" value="baseline and differential"/>
</dbReference>
<dbReference type="GO" id="GO:0005829">
    <property type="term" value="C:cytosol"/>
    <property type="evidence" value="ECO:0007669"/>
    <property type="project" value="GOC"/>
</dbReference>
<dbReference type="GO" id="GO:0010008">
    <property type="term" value="C:endosome membrane"/>
    <property type="evidence" value="ECO:0000314"/>
    <property type="project" value="UniProtKB"/>
</dbReference>
<dbReference type="GO" id="GO:0005794">
    <property type="term" value="C:Golgi apparatus"/>
    <property type="evidence" value="ECO:0007669"/>
    <property type="project" value="UniProtKB-SubCell"/>
</dbReference>
<dbReference type="GO" id="GO:0005739">
    <property type="term" value="C:mitochondrion"/>
    <property type="evidence" value="ECO:0007005"/>
    <property type="project" value="TAIR"/>
</dbReference>
<dbReference type="GO" id="GO:0030906">
    <property type="term" value="C:retromer, cargo-selective complex"/>
    <property type="evidence" value="ECO:0007669"/>
    <property type="project" value="InterPro"/>
</dbReference>
<dbReference type="GO" id="GO:0015031">
    <property type="term" value="P:protein transport"/>
    <property type="evidence" value="ECO:0007669"/>
    <property type="project" value="UniProtKB-KW"/>
</dbReference>
<dbReference type="GO" id="GO:0042147">
    <property type="term" value="P:retrograde transport, endosome to Golgi"/>
    <property type="evidence" value="ECO:0007669"/>
    <property type="project" value="InterPro"/>
</dbReference>
<dbReference type="FunFam" id="1.25.40.660:FF:000003">
    <property type="entry name" value="Vacuolar protein sorting-associated protein 35"/>
    <property type="match status" value="1"/>
</dbReference>
<dbReference type="Gene3D" id="1.25.40.660">
    <property type="entry name" value="Vacuolar protein sorting-associated protein 35, helical subcomplex Vps35-C"/>
    <property type="match status" value="1"/>
</dbReference>
<dbReference type="InterPro" id="IPR005378">
    <property type="entry name" value="Vps35"/>
</dbReference>
<dbReference type="InterPro" id="IPR042491">
    <property type="entry name" value="Vps35_C"/>
</dbReference>
<dbReference type="PANTHER" id="PTHR11099:SF0">
    <property type="entry name" value="VACUOLAR PROTEIN SORTING-ASSOCIATED PROTEIN 35"/>
    <property type="match status" value="1"/>
</dbReference>
<dbReference type="PANTHER" id="PTHR11099">
    <property type="entry name" value="VACUOLAR SORTING PROTEIN 35"/>
    <property type="match status" value="1"/>
</dbReference>
<dbReference type="Pfam" id="PF03635">
    <property type="entry name" value="Vps35"/>
    <property type="match status" value="1"/>
</dbReference>
<dbReference type="PIRSF" id="PIRSF009375">
    <property type="entry name" value="Retromer_Vps35"/>
    <property type="match status" value="1"/>
</dbReference>
<protein>
    <recommendedName>
        <fullName>Vacuolar protein sorting-associated protein 35A</fullName>
    </recommendedName>
    <alternativeName>
        <fullName>Protein ZIG SUPPRESSOR 3</fullName>
    </alternativeName>
    <alternativeName>
        <fullName>Vesicle protein sorting 35A</fullName>
    </alternativeName>
</protein>
<sequence length="787" mass="89493">MIADGSEDEEKWLAAGAAAFKQNAFYMQRAIDSNNLKDALKYSAQMLSELRTSKLSPHKYYDLYMRAFDELRKLEIFFMEETRRGCSVIELYELVQHAGNILPRLYLLCTAGSVYIKTKEAPAKEILKDLVEMCRGIQHPLRGLFLRSYLAQISRDKLPDIGSEYEGDADTVIDAVEFVLLNFTEMNKLWVRMQHQGPAREKERREKERGELRDLVGKNLHVLSQLEGVDLDMYRDTVLPRVLEQIVNCRDEIAQYYLIDCIIQVFPDEYHLQTLDVLLGACPQLQASVDIMTVLSRLMERLSNYAALNAEVLPYFLQVEAFSKLNNAIGKVIEAQEDMPILSAVTLYSSLLKFTLHVHPDRLDYADQVLGSCVKQLSGKGKIDDTRATKELVSLLSAPLEKYNDVVTALKLTNYPLVVEYLDTETKRIMATVIVRSIMKNNTLITTAEKVEALFELIKGIINDLDEPQGLEVDEDDFQEEQNSVALLIHMLYNDDPEEMFKIVNVLKKHFLTGGPKRLKFTIPPLVVSTLKLIRRLPVEGDNPFGKEASVTATKIFQFLNQIIEALPNVPSPDLAFRLYLQCAEAADKCDEEPIAYEFFTQAYILYEEEISDSKAQVTALQLIIGTLQRMQVFGVENRDTLTHKATGYAAKLLKKPDQCRAVYACSHLFWLEDRETIQDGERVLLCLKRALKIANSAQQVANTARGSTGSVTLFIEILNKYLYFYEKGVPQITVESVESLIKLIKNEESMPSDPSAESFFATTLEFMEFQKQKEGAIGERYQAIKV</sequence>
<organism>
    <name type="scientific">Arabidopsis thaliana</name>
    <name type="common">Mouse-ear cress</name>
    <dbReference type="NCBI Taxonomy" id="3702"/>
    <lineage>
        <taxon>Eukaryota</taxon>
        <taxon>Viridiplantae</taxon>
        <taxon>Streptophyta</taxon>
        <taxon>Embryophyta</taxon>
        <taxon>Tracheophyta</taxon>
        <taxon>Spermatophyta</taxon>
        <taxon>Magnoliopsida</taxon>
        <taxon>eudicotyledons</taxon>
        <taxon>Gunneridae</taxon>
        <taxon>Pentapetalae</taxon>
        <taxon>rosids</taxon>
        <taxon>malvids</taxon>
        <taxon>Brassicales</taxon>
        <taxon>Brassicaceae</taxon>
        <taxon>Camelineae</taxon>
        <taxon>Arabidopsis</taxon>
    </lineage>
</organism>
<comment type="function">
    <text evidence="2 3 5">Plays a role in vesicular protein sorting. Component of the membrane-associated retromer complex which is essential in endosome-to-Golgi retrograde transport. Also involved in the efficient sorting of seed storage proteins (Probable). Binds alone to endosomal membranes and is required for recruitment of VPS26 and VPS29 to membrane (PubMed:23362252). The VPS29-VPS26-VPS35 subcomplex may be involved in recycling of specific cargos from endosome to the plasma membrane (PubMed:20086190).</text>
</comment>
<comment type="subunit">
    <text evidence="3 5">Component of the retromer complex which consists of VPS29 (MAG1), VPS26 (VPS26A or VPS26B), VPS35 (VPS35A or VPS35B or VPS35C), VPS5/17 (SNX1 or SNX2A or SNX2B). Component of a retromer subcomplex consisting of VPS29 (MAG1), VPS26 (VPS26A or VPS26B), VPS35 (VPS35A or VPS35B or VPS35C) (Probable). Interacts with RABG3F (PubMed:23362252).</text>
</comment>
<comment type="subcellular location">
    <subcellularLocation>
        <location>Cytoplasm</location>
    </subcellularLocation>
    <subcellularLocation>
        <location evidence="3">Endosome membrane</location>
        <topology evidence="4">Peripheral membrane protein</topology>
        <orientation evidence="4">Cytoplasmic side</orientation>
    </subcellularLocation>
    <subcellularLocation>
        <location>Prevacuolar compartment membrane</location>
        <topology>Peripheral membrane protein</topology>
        <orientation>Cytoplasmic side</orientation>
    </subcellularLocation>
    <subcellularLocation>
        <location evidence="1">Golgi apparatus</location>
        <location evidence="1">trans-Golgi network membrane</location>
        <topology evidence="1">Peripheral membrane protein</topology>
        <orientation evidence="1">Cytoplasmic side</orientation>
    </subcellularLocation>
</comment>
<comment type="similarity">
    <text evidence="4">Belongs to the VPS35 family.</text>
</comment>
<proteinExistence type="evidence at protein level"/>
<gene>
    <name type="primary">VPS35A</name>
    <name type="synonym">ZIP3</name>
    <name type="ordered locus">At2g17790</name>
    <name type="ORF">T17A5.7</name>
</gene>
<evidence type="ECO:0000250" key="1"/>
<evidence type="ECO:0000269" key="2">
    <source>
    </source>
</evidence>
<evidence type="ECO:0000269" key="3">
    <source>
    </source>
</evidence>
<evidence type="ECO:0000305" key="4"/>
<evidence type="ECO:0000305" key="5">
    <source>
    </source>
</evidence>
<evidence type="ECO:0007744" key="6">
    <source>
    </source>
</evidence>
<reference key="1">
    <citation type="journal article" date="1999" name="Nature">
        <title>Sequence and analysis of chromosome 2 of the plant Arabidopsis thaliana.</title>
        <authorList>
            <person name="Lin X."/>
            <person name="Kaul S."/>
            <person name="Rounsley S.D."/>
            <person name="Shea T.P."/>
            <person name="Benito M.-I."/>
            <person name="Town C.D."/>
            <person name="Fujii C.Y."/>
            <person name="Mason T.M."/>
            <person name="Bowman C.L."/>
            <person name="Barnstead M.E."/>
            <person name="Feldblyum T.V."/>
            <person name="Buell C.R."/>
            <person name="Ketchum K.A."/>
            <person name="Lee J.J."/>
            <person name="Ronning C.M."/>
            <person name="Koo H.L."/>
            <person name="Moffat K.S."/>
            <person name="Cronin L.A."/>
            <person name="Shen M."/>
            <person name="Pai G."/>
            <person name="Van Aken S."/>
            <person name="Umayam L."/>
            <person name="Tallon L.J."/>
            <person name="Gill J.E."/>
            <person name="Adams M.D."/>
            <person name="Carrera A.J."/>
            <person name="Creasy T.H."/>
            <person name="Goodman H.M."/>
            <person name="Somerville C.R."/>
            <person name="Copenhaver G.P."/>
            <person name="Preuss D."/>
            <person name="Nierman W.C."/>
            <person name="White O."/>
            <person name="Eisen J.A."/>
            <person name="Salzberg S.L."/>
            <person name="Fraser C.M."/>
            <person name="Venter J.C."/>
        </authorList>
    </citation>
    <scope>NUCLEOTIDE SEQUENCE [LARGE SCALE GENOMIC DNA]</scope>
    <source>
        <strain>cv. Columbia</strain>
    </source>
</reference>
<reference key="2">
    <citation type="journal article" date="2017" name="Plant J.">
        <title>Araport11: a complete reannotation of the Arabidopsis thaliana reference genome.</title>
        <authorList>
            <person name="Cheng C.Y."/>
            <person name="Krishnakumar V."/>
            <person name="Chan A.P."/>
            <person name="Thibaud-Nissen F."/>
            <person name="Schobel S."/>
            <person name="Town C.D."/>
        </authorList>
    </citation>
    <scope>GENOME REANNOTATION</scope>
    <source>
        <strain>cv. Columbia</strain>
    </source>
</reference>
<reference key="3">
    <citation type="journal article" date="2003" name="Science">
        <title>Empirical analysis of transcriptional activity in the Arabidopsis genome.</title>
        <authorList>
            <person name="Yamada K."/>
            <person name="Lim J."/>
            <person name="Dale J.M."/>
            <person name="Chen H."/>
            <person name="Shinn P."/>
            <person name="Palm C.J."/>
            <person name="Southwick A.M."/>
            <person name="Wu H.C."/>
            <person name="Kim C.J."/>
            <person name="Nguyen M."/>
            <person name="Pham P.K."/>
            <person name="Cheuk R.F."/>
            <person name="Karlin-Newmann G."/>
            <person name="Liu S.X."/>
            <person name="Lam B."/>
            <person name="Sakano H."/>
            <person name="Wu T."/>
            <person name="Yu G."/>
            <person name="Miranda M."/>
            <person name="Quach H.L."/>
            <person name="Tripp M."/>
            <person name="Chang C.H."/>
            <person name="Lee J.M."/>
            <person name="Toriumi M.J."/>
            <person name="Chan M.M."/>
            <person name="Tang C.C."/>
            <person name="Onodera C.S."/>
            <person name="Deng J.M."/>
            <person name="Akiyama K."/>
            <person name="Ansari Y."/>
            <person name="Arakawa T."/>
            <person name="Banh J."/>
            <person name="Banno F."/>
            <person name="Bowser L."/>
            <person name="Brooks S.Y."/>
            <person name="Carninci P."/>
            <person name="Chao Q."/>
            <person name="Choy N."/>
            <person name="Enju A."/>
            <person name="Goldsmith A.D."/>
            <person name="Gurjal M."/>
            <person name="Hansen N.F."/>
            <person name="Hayashizaki Y."/>
            <person name="Johnson-Hopson C."/>
            <person name="Hsuan V.W."/>
            <person name="Iida K."/>
            <person name="Karnes M."/>
            <person name="Khan S."/>
            <person name="Koesema E."/>
            <person name="Ishida J."/>
            <person name="Jiang P.X."/>
            <person name="Jones T."/>
            <person name="Kawai J."/>
            <person name="Kamiya A."/>
            <person name="Meyers C."/>
            <person name="Nakajima M."/>
            <person name="Narusaka M."/>
            <person name="Seki M."/>
            <person name="Sakurai T."/>
            <person name="Satou M."/>
            <person name="Tamse R."/>
            <person name="Vaysberg M."/>
            <person name="Wallender E.K."/>
            <person name="Wong C."/>
            <person name="Yamamura Y."/>
            <person name="Yuan S."/>
            <person name="Shinozaki K."/>
            <person name="Davis R.W."/>
            <person name="Theologis A."/>
            <person name="Ecker J.R."/>
        </authorList>
    </citation>
    <scope>NUCLEOTIDE SEQUENCE [LARGE SCALE MRNA]</scope>
    <source>
        <strain>cv. Columbia</strain>
    </source>
</reference>
<reference key="4">
    <citation type="submission" date="2006-07" db="EMBL/GenBank/DDBJ databases">
        <title>Large-scale analysis of RIKEN Arabidopsis full-length (RAFL) cDNAs.</title>
        <authorList>
            <person name="Totoki Y."/>
            <person name="Seki M."/>
            <person name="Ishida J."/>
            <person name="Nakajima M."/>
            <person name="Enju A."/>
            <person name="Kamiya A."/>
            <person name="Narusaka M."/>
            <person name="Shin-i T."/>
            <person name="Nakagawa M."/>
            <person name="Sakamoto N."/>
            <person name="Oishi K."/>
            <person name="Kohara Y."/>
            <person name="Kobayashi M."/>
            <person name="Toyoda A."/>
            <person name="Sakaki Y."/>
            <person name="Sakurai T."/>
            <person name="Iida K."/>
            <person name="Akiyama K."/>
            <person name="Satou M."/>
            <person name="Toyoda T."/>
            <person name="Konagaya A."/>
            <person name="Carninci P."/>
            <person name="Kawai J."/>
            <person name="Hayashizaki Y."/>
            <person name="Shinozaki K."/>
        </authorList>
    </citation>
    <scope>NUCLEOTIDE SEQUENCE [LARGE SCALE MRNA] OF 591-787</scope>
    <source>
        <strain>cv. Columbia</strain>
    </source>
</reference>
<reference key="5">
    <citation type="journal article" date="2006" name="Plant Cell">
        <title>Plant retromer, localized to the prevacuolar compartment and microvesicles in Arabidopsis, may interact with vacuolar sorting receptors.</title>
        <authorList>
            <person name="Oliviusson P."/>
            <person name="Heinzerling O."/>
            <person name="Hillmer S."/>
            <person name="Hinz G."/>
            <person name="Tse Y.C."/>
            <person name="Jiang L."/>
            <person name="Robinson D.G."/>
        </authorList>
    </citation>
    <scope>COMPONENT OF THE RETROMER COMPLEX</scope>
    <scope>SUBCELLULAR LOCATION</scope>
</reference>
<reference key="6">
    <citation type="journal article" date="2008" name="Plant Cell Physiol.">
        <title>Arabidopsis VPS35, a retromer component, is required for vacuolar protein sorting and involved in plant growth and leaf senescence.</title>
        <authorList>
            <person name="Yamazaki M."/>
            <person name="Shimada T."/>
            <person name="Takahashi H."/>
            <person name="Tamura K."/>
            <person name="Kondo M."/>
            <person name="Nishimura M."/>
            <person name="Hara-Nishimura I."/>
        </authorList>
    </citation>
    <scope>SUBCELLULAR LOCATION</scope>
</reference>
<reference key="7">
    <citation type="journal article" date="2010" name="Plant Cell">
        <title>Loss-of-function mutations of retromer large subunit genes suppress the phenotype of an Arabidopsis zig mutant that lacks Qb-SNARE VTI11.</title>
        <authorList>
            <person name="Hashiguchi Y."/>
            <person name="Niihama M."/>
            <person name="Takahashi T."/>
            <person name="Saito C."/>
            <person name="Nakano A."/>
            <person name="Tasaka M."/>
            <person name="Morita M.T."/>
        </authorList>
    </citation>
    <scope>FUNCTION</scope>
</reference>
<reference key="8">
    <citation type="journal article" date="2012" name="Mol. Cell. Proteomics">
        <title>Comparative large-scale characterisation of plant vs. mammal proteins reveals similar and idiosyncratic N-alpha acetylation features.</title>
        <authorList>
            <person name="Bienvenut W.V."/>
            <person name="Sumpton D."/>
            <person name="Martinez A."/>
            <person name="Lilla S."/>
            <person name="Espagne C."/>
            <person name="Meinnel T."/>
            <person name="Giglione C."/>
        </authorList>
    </citation>
    <scope>ACETYLATION [LARGE SCALE ANALYSIS] AT MET-1</scope>
    <scope>IDENTIFICATION BY MASS SPECTROMETRY [LARGE SCALE ANALYSIS]</scope>
</reference>
<reference key="9">
    <citation type="journal article" date="2013" name="J. Biol. Chem.">
        <title>Mechanisms governing the endosomal membrane recruitment of the core retromer in Arabidopsis.</title>
        <authorList>
            <person name="Zelazny E."/>
            <person name="Santambrogio M."/>
            <person name="Pourcher M."/>
            <person name="Chambrier P."/>
            <person name="Berne-Dedieu A."/>
            <person name="Fobis-Loisy I."/>
            <person name="Miege C."/>
            <person name="Jaillais Y."/>
            <person name="Gaude T."/>
        </authorList>
    </citation>
    <scope>FUNCTION</scope>
    <scope>INTERACTION WITH RABG3F</scope>
    <scope>SUBCELLULAR LOCATION</scope>
</reference>
<name>VP35A_ARATH</name>
<accession>Q7X659</accession>
<accession>Q0WMP3</accession>
<feature type="chain" id="PRO_0000414724" description="Vacuolar protein sorting-associated protein 35A">
    <location>
        <begin position="1"/>
        <end position="787"/>
    </location>
</feature>
<feature type="modified residue" description="N-acetylmethionine" evidence="6">
    <location>
        <position position="1"/>
    </location>
</feature>
<keyword id="KW-0007">Acetylation</keyword>
<keyword id="KW-0963">Cytoplasm</keyword>
<keyword id="KW-0967">Endosome</keyword>
<keyword id="KW-0333">Golgi apparatus</keyword>
<keyword id="KW-0472">Membrane</keyword>
<keyword id="KW-0653">Protein transport</keyword>
<keyword id="KW-1185">Reference proteome</keyword>
<keyword id="KW-0813">Transport</keyword>